<name>KAD_PELUB</name>
<proteinExistence type="inferred from homology"/>
<sequence>MNIILFGPPGAGKGTQAQSIVKKHNYFQLSTGNLLRDEVKSKTDLGVDIEKLISNGKFVSDEIVNTLLRQSLTNLKYRDRIIFDGYPRNVEQAINLEVLLNEFNQTIGHTIFLNVSRDIIEKRIMGRMTCEKCNMTLNEYFNKEQIELHPCGVEHLKKRKDDNLEIVISRYDTYMSSTKPVLEFYSKNSNFTEIDGAGEIDQITNKINEILKV</sequence>
<keyword id="KW-0067">ATP-binding</keyword>
<keyword id="KW-0963">Cytoplasm</keyword>
<keyword id="KW-0418">Kinase</keyword>
<keyword id="KW-0545">Nucleotide biosynthesis</keyword>
<keyword id="KW-0547">Nucleotide-binding</keyword>
<keyword id="KW-1185">Reference proteome</keyword>
<keyword id="KW-0808">Transferase</keyword>
<dbReference type="EC" id="2.7.4.3" evidence="1"/>
<dbReference type="EMBL" id="CP000084">
    <property type="protein sequence ID" value="AAZ21900.1"/>
    <property type="molecule type" value="Genomic_DNA"/>
</dbReference>
<dbReference type="RefSeq" id="WP_006996831.1">
    <property type="nucleotide sequence ID" value="NC_007205.1"/>
</dbReference>
<dbReference type="SMR" id="Q4FLN8"/>
<dbReference type="STRING" id="335992.SAR11_1096"/>
<dbReference type="GeneID" id="66295586"/>
<dbReference type="KEGG" id="pub:SAR11_1096"/>
<dbReference type="eggNOG" id="COG0563">
    <property type="taxonomic scope" value="Bacteria"/>
</dbReference>
<dbReference type="HOGENOM" id="CLU_032354_1_2_5"/>
<dbReference type="OrthoDB" id="9805030at2"/>
<dbReference type="UniPathway" id="UPA00588">
    <property type="reaction ID" value="UER00649"/>
</dbReference>
<dbReference type="Proteomes" id="UP000002528">
    <property type="component" value="Chromosome"/>
</dbReference>
<dbReference type="GO" id="GO:0005737">
    <property type="term" value="C:cytoplasm"/>
    <property type="evidence" value="ECO:0007669"/>
    <property type="project" value="UniProtKB-SubCell"/>
</dbReference>
<dbReference type="GO" id="GO:0004017">
    <property type="term" value="F:adenylate kinase activity"/>
    <property type="evidence" value="ECO:0007669"/>
    <property type="project" value="UniProtKB-UniRule"/>
</dbReference>
<dbReference type="GO" id="GO:0005524">
    <property type="term" value="F:ATP binding"/>
    <property type="evidence" value="ECO:0007669"/>
    <property type="project" value="UniProtKB-UniRule"/>
</dbReference>
<dbReference type="GO" id="GO:0044209">
    <property type="term" value="P:AMP salvage"/>
    <property type="evidence" value="ECO:0007669"/>
    <property type="project" value="UniProtKB-UniRule"/>
</dbReference>
<dbReference type="CDD" id="cd01428">
    <property type="entry name" value="ADK"/>
    <property type="match status" value="1"/>
</dbReference>
<dbReference type="Gene3D" id="3.40.50.300">
    <property type="entry name" value="P-loop containing nucleotide triphosphate hydrolases"/>
    <property type="match status" value="1"/>
</dbReference>
<dbReference type="HAMAP" id="MF_00235">
    <property type="entry name" value="Adenylate_kinase_Adk"/>
    <property type="match status" value="1"/>
</dbReference>
<dbReference type="InterPro" id="IPR006259">
    <property type="entry name" value="Adenyl_kin_sub"/>
</dbReference>
<dbReference type="InterPro" id="IPR000850">
    <property type="entry name" value="Adenylat/UMP-CMP_kin"/>
</dbReference>
<dbReference type="InterPro" id="IPR033690">
    <property type="entry name" value="Adenylat_kinase_CS"/>
</dbReference>
<dbReference type="InterPro" id="IPR027417">
    <property type="entry name" value="P-loop_NTPase"/>
</dbReference>
<dbReference type="NCBIfam" id="TIGR01351">
    <property type="entry name" value="adk"/>
    <property type="match status" value="1"/>
</dbReference>
<dbReference type="NCBIfam" id="NF001381">
    <property type="entry name" value="PRK00279.1-3"/>
    <property type="match status" value="1"/>
</dbReference>
<dbReference type="PANTHER" id="PTHR23359">
    <property type="entry name" value="NUCLEOTIDE KINASE"/>
    <property type="match status" value="1"/>
</dbReference>
<dbReference type="Pfam" id="PF00406">
    <property type="entry name" value="ADK"/>
    <property type="match status" value="1"/>
</dbReference>
<dbReference type="PRINTS" id="PR00094">
    <property type="entry name" value="ADENYLTKNASE"/>
</dbReference>
<dbReference type="SUPFAM" id="SSF52540">
    <property type="entry name" value="P-loop containing nucleoside triphosphate hydrolases"/>
    <property type="match status" value="1"/>
</dbReference>
<dbReference type="PROSITE" id="PS00113">
    <property type="entry name" value="ADENYLATE_KINASE"/>
    <property type="match status" value="1"/>
</dbReference>
<gene>
    <name evidence="1" type="primary">adk</name>
    <name type="ordered locus">SAR11_1096</name>
</gene>
<reference key="1">
    <citation type="journal article" date="2005" name="Science">
        <title>Genome streamlining in a cosmopolitan oceanic bacterium.</title>
        <authorList>
            <person name="Giovannoni S.J."/>
            <person name="Tripp H.J."/>
            <person name="Givan S."/>
            <person name="Podar M."/>
            <person name="Vergin K.L."/>
            <person name="Baptista D."/>
            <person name="Bibbs L."/>
            <person name="Eads J."/>
            <person name="Richardson T.H."/>
            <person name="Noordewier M."/>
            <person name="Rappe M.S."/>
            <person name="Short J.M."/>
            <person name="Carrington J.C."/>
            <person name="Mathur E.J."/>
        </authorList>
    </citation>
    <scope>NUCLEOTIDE SEQUENCE [LARGE SCALE GENOMIC DNA]</scope>
    <source>
        <strain>HTCC1062</strain>
    </source>
</reference>
<evidence type="ECO:0000255" key="1">
    <source>
        <dbReference type="HAMAP-Rule" id="MF_00235"/>
    </source>
</evidence>
<organism>
    <name type="scientific">Pelagibacter ubique (strain HTCC1062)</name>
    <dbReference type="NCBI Taxonomy" id="335992"/>
    <lineage>
        <taxon>Bacteria</taxon>
        <taxon>Pseudomonadati</taxon>
        <taxon>Pseudomonadota</taxon>
        <taxon>Alphaproteobacteria</taxon>
        <taxon>Candidatus Pelagibacterales</taxon>
        <taxon>Candidatus Pelagibacteraceae</taxon>
        <taxon>Candidatus Pelagibacter</taxon>
    </lineage>
</organism>
<protein>
    <recommendedName>
        <fullName evidence="1">Adenylate kinase</fullName>
        <shortName evidence="1">AK</shortName>
        <ecNumber evidence="1">2.7.4.3</ecNumber>
    </recommendedName>
    <alternativeName>
        <fullName evidence="1">ATP-AMP transphosphorylase</fullName>
    </alternativeName>
    <alternativeName>
        <fullName evidence="1">ATP:AMP phosphotransferase</fullName>
    </alternativeName>
    <alternativeName>
        <fullName evidence="1">Adenylate monophosphate kinase</fullName>
    </alternativeName>
</protein>
<feature type="chain" id="PRO_1000021757" description="Adenylate kinase">
    <location>
        <begin position="1"/>
        <end position="213"/>
    </location>
</feature>
<feature type="region of interest" description="NMP" evidence="1">
    <location>
        <begin position="30"/>
        <end position="59"/>
    </location>
</feature>
<feature type="region of interest" description="LID" evidence="1">
    <location>
        <begin position="126"/>
        <end position="162"/>
    </location>
</feature>
<feature type="binding site" evidence="1">
    <location>
        <begin position="10"/>
        <end position="15"/>
    </location>
    <ligand>
        <name>ATP</name>
        <dbReference type="ChEBI" id="CHEBI:30616"/>
    </ligand>
</feature>
<feature type="binding site" evidence="1">
    <location>
        <position position="31"/>
    </location>
    <ligand>
        <name>AMP</name>
        <dbReference type="ChEBI" id="CHEBI:456215"/>
    </ligand>
</feature>
<feature type="binding site" evidence="1">
    <location>
        <position position="36"/>
    </location>
    <ligand>
        <name>AMP</name>
        <dbReference type="ChEBI" id="CHEBI:456215"/>
    </ligand>
</feature>
<feature type="binding site" evidence="1">
    <location>
        <begin position="57"/>
        <end position="59"/>
    </location>
    <ligand>
        <name>AMP</name>
        <dbReference type="ChEBI" id="CHEBI:456215"/>
    </ligand>
</feature>
<feature type="binding site" evidence="1">
    <location>
        <begin position="85"/>
        <end position="88"/>
    </location>
    <ligand>
        <name>AMP</name>
        <dbReference type="ChEBI" id="CHEBI:456215"/>
    </ligand>
</feature>
<feature type="binding site" evidence="1">
    <location>
        <position position="92"/>
    </location>
    <ligand>
        <name>AMP</name>
        <dbReference type="ChEBI" id="CHEBI:456215"/>
    </ligand>
</feature>
<feature type="binding site" evidence="1">
    <location>
        <position position="127"/>
    </location>
    <ligand>
        <name>ATP</name>
        <dbReference type="ChEBI" id="CHEBI:30616"/>
    </ligand>
</feature>
<feature type="binding site" evidence="1">
    <location>
        <position position="159"/>
    </location>
    <ligand>
        <name>AMP</name>
        <dbReference type="ChEBI" id="CHEBI:456215"/>
    </ligand>
</feature>
<feature type="binding site" evidence="1">
    <location>
        <position position="170"/>
    </location>
    <ligand>
        <name>AMP</name>
        <dbReference type="ChEBI" id="CHEBI:456215"/>
    </ligand>
</feature>
<feature type="binding site" evidence="1">
    <location>
        <position position="198"/>
    </location>
    <ligand>
        <name>ATP</name>
        <dbReference type="ChEBI" id="CHEBI:30616"/>
    </ligand>
</feature>
<comment type="function">
    <text evidence="1">Catalyzes the reversible transfer of the terminal phosphate group between ATP and AMP. Plays an important role in cellular energy homeostasis and in adenine nucleotide metabolism.</text>
</comment>
<comment type="catalytic activity">
    <reaction evidence="1">
        <text>AMP + ATP = 2 ADP</text>
        <dbReference type="Rhea" id="RHEA:12973"/>
        <dbReference type="ChEBI" id="CHEBI:30616"/>
        <dbReference type="ChEBI" id="CHEBI:456215"/>
        <dbReference type="ChEBI" id="CHEBI:456216"/>
        <dbReference type="EC" id="2.7.4.3"/>
    </reaction>
</comment>
<comment type="pathway">
    <text evidence="1">Purine metabolism; AMP biosynthesis via salvage pathway; AMP from ADP: step 1/1.</text>
</comment>
<comment type="subunit">
    <text evidence="1">Monomer.</text>
</comment>
<comment type="subcellular location">
    <subcellularLocation>
        <location evidence="1">Cytoplasm</location>
    </subcellularLocation>
</comment>
<comment type="domain">
    <text evidence="1">Consists of three domains, a large central CORE domain and two small peripheral domains, NMPbind and LID, which undergo movements during catalysis. The LID domain closes over the site of phosphoryl transfer upon ATP binding. Assembling and dissambling the active center during each catalytic cycle provides an effective means to prevent ATP hydrolysis.</text>
</comment>
<comment type="similarity">
    <text evidence="1">Belongs to the adenylate kinase family.</text>
</comment>
<accession>Q4FLN8</accession>